<sequence length="486" mass="54752">MTTFYTVVSWLVILGYWVLIAGVTLRILMKRRAVPSAMAWLLIIYILPMVGIIAYLSVGELHLGKRRAERARAMWPSTAKWLNDLKACKHIFAQENSSVASSLFKLCERRQGIAGVKGNQLQLLTDSDDVMQALIRDIQLARHNIEMVFYIWQPGGMADQVAESLMAAARRGIHCRLMLDSAGSVAFFRSPWAAMMRNAGIEVVEALKVNLMRVFLRRMDLRQHRKMVMIDNYIAYTGSMNMVDPRFFKQDAGVGQWVDLMARMEGPVATAMGIVYSCDWEIETGKRILPPPPDVNIMPFEQASGHTIHTIASGPGFPEDLIHQALLTATYAAREYLIMTTPYFVPSDDLLHAICTAAQRGVDVSIILPRKNDSLLVGWASRAFFSELLAAGVKIYQFEGGLLHTKSVLVDGELSLVGTVNLDMRSLWLNFEITLVIDDTGFGADLAAVQDDYISRSRLLDARLWVKRPLWQRITERLFYFFSPLL</sequence>
<reference key="1">
    <citation type="journal article" date="2008" name="Genome Res.">
        <title>Comparative genome analysis of Salmonella enteritidis PT4 and Salmonella gallinarum 287/91 provides insights into evolutionary and host adaptation pathways.</title>
        <authorList>
            <person name="Thomson N.R."/>
            <person name="Clayton D.J."/>
            <person name="Windhorst D."/>
            <person name="Vernikos G."/>
            <person name="Davidson S."/>
            <person name="Churcher C."/>
            <person name="Quail M.A."/>
            <person name="Stevens M."/>
            <person name="Jones M.A."/>
            <person name="Watson M."/>
            <person name="Barron A."/>
            <person name="Layton A."/>
            <person name="Pickard D."/>
            <person name="Kingsley R.A."/>
            <person name="Bignell A."/>
            <person name="Clark L."/>
            <person name="Harris B."/>
            <person name="Ormond D."/>
            <person name="Abdellah Z."/>
            <person name="Brooks K."/>
            <person name="Cherevach I."/>
            <person name="Chillingworth T."/>
            <person name="Woodward J."/>
            <person name="Norberczak H."/>
            <person name="Lord A."/>
            <person name="Arrowsmith C."/>
            <person name="Jagels K."/>
            <person name="Moule S."/>
            <person name="Mungall K."/>
            <person name="Saunders M."/>
            <person name="Whitehead S."/>
            <person name="Chabalgoity J.A."/>
            <person name="Maskell D."/>
            <person name="Humphreys T."/>
            <person name="Roberts M."/>
            <person name="Barrow P.A."/>
            <person name="Dougan G."/>
            <person name="Parkhill J."/>
        </authorList>
    </citation>
    <scope>NUCLEOTIDE SEQUENCE [LARGE SCALE GENOMIC DNA]</scope>
    <source>
        <strain>287/91 / NCTC 13346</strain>
    </source>
</reference>
<dbReference type="EC" id="2.7.8.-" evidence="1"/>
<dbReference type="EMBL" id="AM933173">
    <property type="protein sequence ID" value="CAR37249.1"/>
    <property type="molecule type" value="Genomic_DNA"/>
</dbReference>
<dbReference type="RefSeq" id="WP_000206889.1">
    <property type="nucleotide sequence ID" value="NC_011274.1"/>
</dbReference>
<dbReference type="SMR" id="B5R6L2"/>
<dbReference type="KEGG" id="seg:SG1376"/>
<dbReference type="HOGENOM" id="CLU_038053_1_0_6"/>
<dbReference type="Proteomes" id="UP000008321">
    <property type="component" value="Chromosome"/>
</dbReference>
<dbReference type="GO" id="GO:0005886">
    <property type="term" value="C:plasma membrane"/>
    <property type="evidence" value="ECO:0007669"/>
    <property type="project" value="UniProtKB-SubCell"/>
</dbReference>
<dbReference type="GO" id="GO:0008808">
    <property type="term" value="F:cardiolipin synthase activity"/>
    <property type="evidence" value="ECO:0007669"/>
    <property type="project" value="InterPro"/>
</dbReference>
<dbReference type="GO" id="GO:0032049">
    <property type="term" value="P:cardiolipin biosynthetic process"/>
    <property type="evidence" value="ECO:0007669"/>
    <property type="project" value="InterPro"/>
</dbReference>
<dbReference type="CDD" id="cd09152">
    <property type="entry name" value="PLDc_EcCLS_like_1"/>
    <property type="match status" value="1"/>
</dbReference>
<dbReference type="CDD" id="cd09158">
    <property type="entry name" value="PLDc_EcCLS_like_2"/>
    <property type="match status" value="1"/>
</dbReference>
<dbReference type="FunFam" id="3.30.870.10:FF:000002">
    <property type="entry name" value="Cardiolipin synthase A"/>
    <property type="match status" value="1"/>
</dbReference>
<dbReference type="FunFam" id="3.30.870.10:FF:000003">
    <property type="entry name" value="Cardiolipin synthase A"/>
    <property type="match status" value="1"/>
</dbReference>
<dbReference type="Gene3D" id="3.30.870.10">
    <property type="entry name" value="Endonuclease Chain A"/>
    <property type="match status" value="2"/>
</dbReference>
<dbReference type="HAMAP" id="MF_00190">
    <property type="entry name" value="Cardiolipin_synth_ClsA"/>
    <property type="match status" value="1"/>
</dbReference>
<dbReference type="InterPro" id="IPR022924">
    <property type="entry name" value="Cardiolipin_synthase"/>
</dbReference>
<dbReference type="InterPro" id="IPR030840">
    <property type="entry name" value="CL_synthase_A"/>
</dbReference>
<dbReference type="InterPro" id="IPR027379">
    <property type="entry name" value="CLS_N"/>
</dbReference>
<dbReference type="InterPro" id="IPR025202">
    <property type="entry name" value="PLD-like_dom"/>
</dbReference>
<dbReference type="InterPro" id="IPR001736">
    <property type="entry name" value="PLipase_D/transphosphatidylase"/>
</dbReference>
<dbReference type="NCBIfam" id="TIGR04265">
    <property type="entry name" value="bac_cardiolipin"/>
    <property type="match status" value="1"/>
</dbReference>
<dbReference type="PANTHER" id="PTHR21248">
    <property type="entry name" value="CARDIOLIPIN SYNTHASE"/>
    <property type="match status" value="1"/>
</dbReference>
<dbReference type="PANTHER" id="PTHR21248:SF22">
    <property type="entry name" value="PHOSPHOLIPASE D"/>
    <property type="match status" value="1"/>
</dbReference>
<dbReference type="Pfam" id="PF13091">
    <property type="entry name" value="PLDc_2"/>
    <property type="match status" value="2"/>
</dbReference>
<dbReference type="Pfam" id="PF13396">
    <property type="entry name" value="PLDc_N"/>
    <property type="match status" value="1"/>
</dbReference>
<dbReference type="SMART" id="SM00155">
    <property type="entry name" value="PLDc"/>
    <property type="match status" value="2"/>
</dbReference>
<dbReference type="SUPFAM" id="SSF56024">
    <property type="entry name" value="Phospholipase D/nuclease"/>
    <property type="match status" value="2"/>
</dbReference>
<dbReference type="PROSITE" id="PS50035">
    <property type="entry name" value="PLD"/>
    <property type="match status" value="2"/>
</dbReference>
<organism>
    <name type="scientific">Salmonella gallinarum (strain 287/91 / NCTC 13346)</name>
    <dbReference type="NCBI Taxonomy" id="550538"/>
    <lineage>
        <taxon>Bacteria</taxon>
        <taxon>Pseudomonadati</taxon>
        <taxon>Pseudomonadota</taxon>
        <taxon>Gammaproteobacteria</taxon>
        <taxon>Enterobacterales</taxon>
        <taxon>Enterobacteriaceae</taxon>
        <taxon>Salmonella</taxon>
    </lineage>
</organism>
<name>CLSA_SALG2</name>
<keyword id="KW-0997">Cell inner membrane</keyword>
<keyword id="KW-1003">Cell membrane</keyword>
<keyword id="KW-0444">Lipid biosynthesis</keyword>
<keyword id="KW-0443">Lipid metabolism</keyword>
<keyword id="KW-0472">Membrane</keyword>
<keyword id="KW-0594">Phospholipid biosynthesis</keyword>
<keyword id="KW-1208">Phospholipid metabolism</keyword>
<keyword id="KW-0677">Repeat</keyword>
<keyword id="KW-0808">Transferase</keyword>
<keyword id="KW-0812">Transmembrane</keyword>
<keyword id="KW-1133">Transmembrane helix</keyword>
<comment type="function">
    <text evidence="1">Catalyzes the reversible phosphatidyl group transfer from one phosphatidylglycerol molecule to another to form cardiolipin (CL) (diphosphatidylglycerol) and glycerol.</text>
</comment>
<comment type="catalytic activity">
    <reaction evidence="1">
        <text>2 a 1,2-diacyl-sn-glycero-3-phospho-(1'-sn-glycerol) = a cardiolipin + glycerol</text>
        <dbReference type="Rhea" id="RHEA:31451"/>
        <dbReference type="ChEBI" id="CHEBI:17754"/>
        <dbReference type="ChEBI" id="CHEBI:62237"/>
        <dbReference type="ChEBI" id="CHEBI:64716"/>
    </reaction>
</comment>
<comment type="subcellular location">
    <subcellularLocation>
        <location evidence="1">Cell inner membrane</location>
        <topology evidence="1">Multi-pass membrane protein</topology>
    </subcellularLocation>
</comment>
<comment type="similarity">
    <text evidence="1">Belongs to the phospholipase D family. Cardiolipin synthase subfamily. ClsA sub-subfamily.</text>
</comment>
<accession>B5R6L2</accession>
<protein>
    <recommendedName>
        <fullName evidence="1">Cardiolipin synthase A</fullName>
        <shortName evidence="1">CL synthase</shortName>
        <ecNumber evidence="1">2.7.8.-</ecNumber>
    </recommendedName>
</protein>
<evidence type="ECO:0000255" key="1">
    <source>
        <dbReference type="HAMAP-Rule" id="MF_00190"/>
    </source>
</evidence>
<gene>
    <name evidence="1" type="primary">clsA</name>
    <name type="synonym">cls</name>
    <name type="ordered locus">SG1376</name>
</gene>
<feature type="chain" id="PRO_1000098914" description="Cardiolipin synthase A">
    <location>
        <begin position="1"/>
        <end position="486"/>
    </location>
</feature>
<feature type="transmembrane region" description="Helical" evidence="1">
    <location>
        <begin position="3"/>
        <end position="23"/>
    </location>
</feature>
<feature type="transmembrane region" description="Helical" evidence="1">
    <location>
        <begin position="38"/>
        <end position="58"/>
    </location>
</feature>
<feature type="domain" description="PLD phosphodiesterase 1" evidence="1">
    <location>
        <begin position="219"/>
        <end position="246"/>
    </location>
</feature>
<feature type="domain" description="PLD phosphodiesterase 2" evidence="1">
    <location>
        <begin position="399"/>
        <end position="426"/>
    </location>
</feature>
<feature type="active site" evidence="1">
    <location>
        <position position="224"/>
    </location>
</feature>
<feature type="active site" evidence="1">
    <location>
        <position position="226"/>
    </location>
</feature>
<feature type="active site" evidence="1">
    <location>
        <position position="231"/>
    </location>
</feature>
<feature type="active site" evidence="1">
    <location>
        <position position="404"/>
    </location>
</feature>
<feature type="active site" evidence="1">
    <location>
        <position position="406"/>
    </location>
</feature>
<feature type="active site" evidence="1">
    <location>
        <position position="411"/>
    </location>
</feature>
<proteinExistence type="inferred from homology"/>